<protein>
    <recommendedName>
        <fullName evidence="1">Homoserine kinase</fullName>
        <shortName evidence="1">HK</shortName>
        <shortName evidence="1">HSK</shortName>
        <ecNumber evidence="1">2.7.1.39</ecNumber>
    </recommendedName>
</protein>
<organism>
    <name type="scientific">Chlorobaculum tepidum (strain ATCC 49652 / DSM 12025 / NBRC 103806 / TLS)</name>
    <name type="common">Chlorobium tepidum</name>
    <dbReference type="NCBI Taxonomy" id="194439"/>
    <lineage>
        <taxon>Bacteria</taxon>
        <taxon>Pseudomonadati</taxon>
        <taxon>Chlorobiota</taxon>
        <taxon>Chlorobiia</taxon>
        <taxon>Chlorobiales</taxon>
        <taxon>Chlorobiaceae</taxon>
        <taxon>Chlorobaculum</taxon>
    </lineage>
</organism>
<reference key="1">
    <citation type="journal article" date="2002" name="Proc. Natl. Acad. Sci. U.S.A.">
        <title>The complete genome sequence of Chlorobium tepidum TLS, a photosynthetic, anaerobic, green-sulfur bacterium.</title>
        <authorList>
            <person name="Eisen J.A."/>
            <person name="Nelson K.E."/>
            <person name="Paulsen I.T."/>
            <person name="Heidelberg J.F."/>
            <person name="Wu M."/>
            <person name="Dodson R.J."/>
            <person name="DeBoy R.T."/>
            <person name="Gwinn M.L."/>
            <person name="Nelson W.C."/>
            <person name="Haft D.H."/>
            <person name="Hickey E.K."/>
            <person name="Peterson J.D."/>
            <person name="Durkin A.S."/>
            <person name="Kolonay J.F."/>
            <person name="Yang F."/>
            <person name="Holt I.E."/>
            <person name="Umayam L.A."/>
            <person name="Mason T.M."/>
            <person name="Brenner M."/>
            <person name="Shea T.P."/>
            <person name="Parksey D.S."/>
            <person name="Nierman W.C."/>
            <person name="Feldblyum T.V."/>
            <person name="Hansen C.L."/>
            <person name="Craven M.B."/>
            <person name="Radune D."/>
            <person name="Vamathevan J.J."/>
            <person name="Khouri H.M."/>
            <person name="White O."/>
            <person name="Gruber T.M."/>
            <person name="Ketchum K.A."/>
            <person name="Venter J.C."/>
            <person name="Tettelin H."/>
            <person name="Bryant D.A."/>
            <person name="Fraser C.M."/>
        </authorList>
    </citation>
    <scope>NUCLEOTIDE SEQUENCE [LARGE SCALE GENOMIC DNA]</scope>
    <source>
        <strain>ATCC 49652 / DSM 12025 / NBRC 103806 / TLS</strain>
    </source>
</reference>
<dbReference type="EC" id="2.7.1.39" evidence="1"/>
<dbReference type="EMBL" id="AE006470">
    <property type="protein sequence ID" value="AAM73251.1"/>
    <property type="molecule type" value="Genomic_DNA"/>
</dbReference>
<dbReference type="RefSeq" id="NP_662909.1">
    <property type="nucleotide sequence ID" value="NC_002932.3"/>
</dbReference>
<dbReference type="RefSeq" id="WP_010933689.1">
    <property type="nucleotide sequence ID" value="NC_002932.3"/>
</dbReference>
<dbReference type="SMR" id="Q8KAW7"/>
<dbReference type="STRING" id="194439.CT2034"/>
<dbReference type="EnsemblBacteria" id="AAM73251">
    <property type="protein sequence ID" value="AAM73251"/>
    <property type="gene ID" value="CT2034"/>
</dbReference>
<dbReference type="KEGG" id="cte:CT2034"/>
<dbReference type="PATRIC" id="fig|194439.7.peg.1843"/>
<dbReference type="eggNOG" id="COG0083">
    <property type="taxonomic scope" value="Bacteria"/>
</dbReference>
<dbReference type="HOGENOM" id="CLU_041243_1_1_10"/>
<dbReference type="OrthoDB" id="9769912at2"/>
<dbReference type="UniPathway" id="UPA00050">
    <property type="reaction ID" value="UER00064"/>
</dbReference>
<dbReference type="Proteomes" id="UP000001007">
    <property type="component" value="Chromosome"/>
</dbReference>
<dbReference type="GO" id="GO:0005737">
    <property type="term" value="C:cytoplasm"/>
    <property type="evidence" value="ECO:0007669"/>
    <property type="project" value="UniProtKB-SubCell"/>
</dbReference>
<dbReference type="GO" id="GO:0005524">
    <property type="term" value="F:ATP binding"/>
    <property type="evidence" value="ECO:0007669"/>
    <property type="project" value="UniProtKB-UniRule"/>
</dbReference>
<dbReference type="GO" id="GO:0004413">
    <property type="term" value="F:homoserine kinase activity"/>
    <property type="evidence" value="ECO:0007669"/>
    <property type="project" value="UniProtKB-UniRule"/>
</dbReference>
<dbReference type="GO" id="GO:0009088">
    <property type="term" value="P:threonine biosynthetic process"/>
    <property type="evidence" value="ECO:0007669"/>
    <property type="project" value="UniProtKB-UniRule"/>
</dbReference>
<dbReference type="Gene3D" id="3.30.230.10">
    <property type="match status" value="1"/>
</dbReference>
<dbReference type="Gene3D" id="3.30.70.890">
    <property type="entry name" value="GHMP kinase, C-terminal domain"/>
    <property type="match status" value="1"/>
</dbReference>
<dbReference type="HAMAP" id="MF_00384">
    <property type="entry name" value="Homoser_kinase"/>
    <property type="match status" value="1"/>
</dbReference>
<dbReference type="InterPro" id="IPR013750">
    <property type="entry name" value="GHMP_kinase_C_dom"/>
</dbReference>
<dbReference type="InterPro" id="IPR036554">
    <property type="entry name" value="GHMP_kinase_C_sf"/>
</dbReference>
<dbReference type="InterPro" id="IPR006204">
    <property type="entry name" value="GHMP_kinase_N_dom"/>
</dbReference>
<dbReference type="InterPro" id="IPR006203">
    <property type="entry name" value="GHMP_knse_ATP-bd_CS"/>
</dbReference>
<dbReference type="InterPro" id="IPR000870">
    <property type="entry name" value="Homoserine_kinase"/>
</dbReference>
<dbReference type="InterPro" id="IPR020568">
    <property type="entry name" value="Ribosomal_Su5_D2-typ_SF"/>
</dbReference>
<dbReference type="InterPro" id="IPR014721">
    <property type="entry name" value="Ribsml_uS5_D2-typ_fold_subgr"/>
</dbReference>
<dbReference type="NCBIfam" id="NF002288">
    <property type="entry name" value="PRK01212.1-4"/>
    <property type="match status" value="1"/>
</dbReference>
<dbReference type="NCBIfam" id="TIGR00191">
    <property type="entry name" value="thrB"/>
    <property type="match status" value="1"/>
</dbReference>
<dbReference type="PANTHER" id="PTHR20861:SF1">
    <property type="entry name" value="HOMOSERINE KINASE"/>
    <property type="match status" value="1"/>
</dbReference>
<dbReference type="PANTHER" id="PTHR20861">
    <property type="entry name" value="HOMOSERINE/4-DIPHOSPHOCYTIDYL-2-C-METHYL-D-ERYTHRITOL KINASE"/>
    <property type="match status" value="1"/>
</dbReference>
<dbReference type="Pfam" id="PF08544">
    <property type="entry name" value="GHMP_kinases_C"/>
    <property type="match status" value="1"/>
</dbReference>
<dbReference type="Pfam" id="PF00288">
    <property type="entry name" value="GHMP_kinases_N"/>
    <property type="match status" value="1"/>
</dbReference>
<dbReference type="PIRSF" id="PIRSF000676">
    <property type="entry name" value="Homoser_kin"/>
    <property type="match status" value="1"/>
</dbReference>
<dbReference type="PRINTS" id="PR00958">
    <property type="entry name" value="HOMSERKINASE"/>
</dbReference>
<dbReference type="SUPFAM" id="SSF55060">
    <property type="entry name" value="GHMP Kinase, C-terminal domain"/>
    <property type="match status" value="1"/>
</dbReference>
<dbReference type="SUPFAM" id="SSF54211">
    <property type="entry name" value="Ribosomal protein S5 domain 2-like"/>
    <property type="match status" value="1"/>
</dbReference>
<dbReference type="PROSITE" id="PS00627">
    <property type="entry name" value="GHMP_KINASES_ATP"/>
    <property type="match status" value="1"/>
</dbReference>
<sequence>MKTVTGFASATVGNVACGFDVLGFAITEPGDEVVLALHDERRSDCPVSITSIVGDGGALPLDPKKNTSSFVVLKFLEYIRTTKGISFDGHIDLVLKKNLPLSSGMGSSAASAAAALIAANELFGSPCTKMELVHFAIEGERVACGSAHADNAAPAMLGNFILIRSYNPLDLITIKPPKNLFGTLVHPHTELKTSFARSVLPKSIPLSTATQQWGNVGALIAGLLMEDYDLIGRALVDVVAEPKRAPLIPGFNEVKQAALDAGALGCSIAGSGPSVFAFSSSRQTAEAVGSAMQSAFLHSRAALQSDMWVSPICSQGARIISTTS</sequence>
<accession>Q8KAW7</accession>
<name>KHSE_CHLTE</name>
<gene>
    <name evidence="1" type="primary">thrB</name>
    <name type="ordered locus">CT2034</name>
</gene>
<proteinExistence type="inferred from homology"/>
<evidence type="ECO:0000255" key="1">
    <source>
        <dbReference type="HAMAP-Rule" id="MF_00384"/>
    </source>
</evidence>
<comment type="function">
    <text evidence="1">Catalyzes the ATP-dependent phosphorylation of L-homoserine to L-homoserine phosphate.</text>
</comment>
<comment type="catalytic activity">
    <reaction evidence="1">
        <text>L-homoserine + ATP = O-phospho-L-homoserine + ADP + H(+)</text>
        <dbReference type="Rhea" id="RHEA:13985"/>
        <dbReference type="ChEBI" id="CHEBI:15378"/>
        <dbReference type="ChEBI" id="CHEBI:30616"/>
        <dbReference type="ChEBI" id="CHEBI:57476"/>
        <dbReference type="ChEBI" id="CHEBI:57590"/>
        <dbReference type="ChEBI" id="CHEBI:456216"/>
        <dbReference type="EC" id="2.7.1.39"/>
    </reaction>
</comment>
<comment type="pathway">
    <text evidence="1">Amino-acid biosynthesis; L-threonine biosynthesis; L-threonine from L-aspartate: step 4/5.</text>
</comment>
<comment type="subcellular location">
    <subcellularLocation>
        <location evidence="1">Cytoplasm</location>
    </subcellularLocation>
</comment>
<comment type="similarity">
    <text evidence="1">Belongs to the GHMP kinase family. Homoserine kinase subfamily.</text>
</comment>
<keyword id="KW-0028">Amino-acid biosynthesis</keyword>
<keyword id="KW-0067">ATP-binding</keyword>
<keyword id="KW-0963">Cytoplasm</keyword>
<keyword id="KW-0418">Kinase</keyword>
<keyword id="KW-0547">Nucleotide-binding</keyword>
<keyword id="KW-1185">Reference proteome</keyword>
<keyword id="KW-0791">Threonine biosynthesis</keyword>
<keyword id="KW-0808">Transferase</keyword>
<feature type="chain" id="PRO_0000156560" description="Homoserine kinase">
    <location>
        <begin position="1"/>
        <end position="324"/>
    </location>
</feature>
<feature type="binding site" evidence="1">
    <location>
        <begin position="100"/>
        <end position="110"/>
    </location>
    <ligand>
        <name>ATP</name>
        <dbReference type="ChEBI" id="CHEBI:30616"/>
    </ligand>
</feature>